<gene>
    <name evidence="1" type="primary">rhlB</name>
    <name type="ordered locus">EcE24377A_4290</name>
</gene>
<feature type="chain" id="PRO_1000082837" description="ATP-dependent RNA helicase RhlB">
    <location>
        <begin position="1"/>
        <end position="421"/>
    </location>
</feature>
<feature type="domain" description="Helicase ATP-binding" evidence="1">
    <location>
        <begin position="40"/>
        <end position="219"/>
    </location>
</feature>
<feature type="domain" description="Helicase C-terminal" evidence="1">
    <location>
        <begin position="245"/>
        <end position="390"/>
    </location>
</feature>
<feature type="region of interest" description="Disordered" evidence="2">
    <location>
        <begin position="392"/>
        <end position="421"/>
    </location>
</feature>
<feature type="short sequence motif" description="Q motif">
    <location>
        <begin position="9"/>
        <end position="37"/>
    </location>
</feature>
<feature type="short sequence motif" description="DEAD box">
    <location>
        <begin position="165"/>
        <end position="168"/>
    </location>
</feature>
<feature type="compositionally biased region" description="Low complexity" evidence="2">
    <location>
        <begin position="402"/>
        <end position="414"/>
    </location>
</feature>
<feature type="binding site" evidence="1">
    <location>
        <begin position="53"/>
        <end position="60"/>
    </location>
    <ligand>
        <name>ATP</name>
        <dbReference type="ChEBI" id="CHEBI:30616"/>
    </ligand>
</feature>
<protein>
    <recommendedName>
        <fullName evidence="1">ATP-dependent RNA helicase RhlB</fullName>
        <ecNumber evidence="1">3.6.4.13</ecNumber>
    </recommendedName>
</protein>
<accession>A7ZTY2</accession>
<sequence length="421" mass="47126">MSKTHLTEQKFSDFALHPKVVEALEKKGFHNCTPIQALALPLTLAGRDVAGQAQTGTGKTMAFLTSTFHYLLSHPAIADRKVNQPRALIMAPTRELAVQIHADAEPLAEATGLKLGLAYGGDGYDKQLKVLESGVDILIGTTGRLIDYAKQNHINLGAIQVVVLDEADRMYDLGFIKDIRWLFRRMPPANQRLNMLFSATLSYRVRELAFEQMNNAEYIEVEPEQKTGHRIKEELFYPSNEEKMRLLQTLIEEEWPDRAIIFANTKHRCEEIWGHLAADGHRVGLLTGDVAQKKRLRILDEFTRGDLDILVATDVAARGLHIPAVTHVFNYDLPDDCEDYVHRIGRTGRAGASGHSISLACEEYALNLPAIETYIGHSIPVSKYNPDALMTDLPKPLRLTRPRTGNGPRRTGAPRNRRRSG</sequence>
<evidence type="ECO:0000255" key="1">
    <source>
        <dbReference type="HAMAP-Rule" id="MF_00661"/>
    </source>
</evidence>
<evidence type="ECO:0000256" key="2">
    <source>
        <dbReference type="SAM" id="MobiDB-lite"/>
    </source>
</evidence>
<organism>
    <name type="scientific">Escherichia coli O139:H28 (strain E24377A / ETEC)</name>
    <dbReference type="NCBI Taxonomy" id="331111"/>
    <lineage>
        <taxon>Bacteria</taxon>
        <taxon>Pseudomonadati</taxon>
        <taxon>Pseudomonadota</taxon>
        <taxon>Gammaproteobacteria</taxon>
        <taxon>Enterobacterales</taxon>
        <taxon>Enterobacteriaceae</taxon>
        <taxon>Escherichia</taxon>
    </lineage>
</organism>
<proteinExistence type="inferred from homology"/>
<comment type="function">
    <text evidence="1">DEAD-box RNA helicase involved in RNA degradation. Has RNA-dependent ATPase activity and unwinds double-stranded RNA.</text>
</comment>
<comment type="catalytic activity">
    <reaction evidence="1">
        <text>ATP + H2O = ADP + phosphate + H(+)</text>
        <dbReference type="Rhea" id="RHEA:13065"/>
        <dbReference type="ChEBI" id="CHEBI:15377"/>
        <dbReference type="ChEBI" id="CHEBI:15378"/>
        <dbReference type="ChEBI" id="CHEBI:30616"/>
        <dbReference type="ChEBI" id="CHEBI:43474"/>
        <dbReference type="ChEBI" id="CHEBI:456216"/>
        <dbReference type="EC" id="3.6.4.13"/>
    </reaction>
</comment>
<comment type="subunit">
    <text evidence="1">Component of the RNA degradosome, which is a multiprotein complex involved in RNA processing and mRNA degradation.</text>
</comment>
<comment type="subcellular location">
    <subcellularLocation>
        <location evidence="1">Cytoplasm</location>
    </subcellularLocation>
</comment>
<comment type="similarity">
    <text evidence="1">Belongs to the DEAD box helicase family. RhlB subfamily.</text>
</comment>
<dbReference type="EC" id="3.6.4.13" evidence="1"/>
<dbReference type="EMBL" id="CP000800">
    <property type="protein sequence ID" value="ABV18670.1"/>
    <property type="molecule type" value="Genomic_DNA"/>
</dbReference>
<dbReference type="RefSeq" id="WP_000047499.1">
    <property type="nucleotide sequence ID" value="NC_009801.1"/>
</dbReference>
<dbReference type="SMR" id="A7ZTY2"/>
<dbReference type="GeneID" id="93778164"/>
<dbReference type="KEGG" id="ecw:EcE24377A_4290"/>
<dbReference type="HOGENOM" id="CLU_003041_1_3_6"/>
<dbReference type="Proteomes" id="UP000001122">
    <property type="component" value="Chromosome"/>
</dbReference>
<dbReference type="GO" id="GO:0005829">
    <property type="term" value="C:cytosol"/>
    <property type="evidence" value="ECO:0007669"/>
    <property type="project" value="TreeGrafter"/>
</dbReference>
<dbReference type="GO" id="GO:0005524">
    <property type="term" value="F:ATP binding"/>
    <property type="evidence" value="ECO:0007669"/>
    <property type="project" value="UniProtKB-UniRule"/>
</dbReference>
<dbReference type="GO" id="GO:0016887">
    <property type="term" value="F:ATP hydrolysis activity"/>
    <property type="evidence" value="ECO:0007669"/>
    <property type="project" value="RHEA"/>
</dbReference>
<dbReference type="GO" id="GO:0003723">
    <property type="term" value="F:RNA binding"/>
    <property type="evidence" value="ECO:0007669"/>
    <property type="project" value="UniProtKB-UniRule"/>
</dbReference>
<dbReference type="GO" id="GO:0003724">
    <property type="term" value="F:RNA helicase activity"/>
    <property type="evidence" value="ECO:0007669"/>
    <property type="project" value="UniProtKB-UniRule"/>
</dbReference>
<dbReference type="GO" id="GO:0006401">
    <property type="term" value="P:RNA catabolic process"/>
    <property type="evidence" value="ECO:0007669"/>
    <property type="project" value="UniProtKB-UniRule"/>
</dbReference>
<dbReference type="CDD" id="cd00268">
    <property type="entry name" value="DEADc"/>
    <property type="match status" value="1"/>
</dbReference>
<dbReference type="CDD" id="cd18787">
    <property type="entry name" value="SF2_C_DEAD"/>
    <property type="match status" value="1"/>
</dbReference>
<dbReference type="FunFam" id="3.40.50.300:FF:000008">
    <property type="entry name" value="ATP-dependent RNA helicase RhlB"/>
    <property type="match status" value="1"/>
</dbReference>
<dbReference type="FunFam" id="3.40.50.300:FF:000312">
    <property type="entry name" value="ATP-dependent RNA helicase RhlB"/>
    <property type="match status" value="1"/>
</dbReference>
<dbReference type="Gene3D" id="3.40.50.300">
    <property type="entry name" value="P-loop containing nucleotide triphosphate hydrolases"/>
    <property type="match status" value="2"/>
</dbReference>
<dbReference type="HAMAP" id="MF_00661">
    <property type="entry name" value="DEAD_helicase_RhlB"/>
    <property type="match status" value="1"/>
</dbReference>
<dbReference type="InterPro" id="IPR011545">
    <property type="entry name" value="DEAD/DEAH_box_helicase_dom"/>
</dbReference>
<dbReference type="InterPro" id="IPR050079">
    <property type="entry name" value="DEAD_box_RNA_helicase"/>
</dbReference>
<dbReference type="InterPro" id="IPR014001">
    <property type="entry name" value="Helicase_ATP-bd"/>
</dbReference>
<dbReference type="InterPro" id="IPR001650">
    <property type="entry name" value="Helicase_C-like"/>
</dbReference>
<dbReference type="InterPro" id="IPR027417">
    <property type="entry name" value="P-loop_NTPase"/>
</dbReference>
<dbReference type="InterPro" id="IPR000629">
    <property type="entry name" value="RNA-helicase_DEAD-box_CS"/>
</dbReference>
<dbReference type="InterPro" id="IPR023554">
    <property type="entry name" value="RNA_helicase_ATP-dep_RhlB"/>
</dbReference>
<dbReference type="InterPro" id="IPR014014">
    <property type="entry name" value="RNA_helicase_DEAD_Q_motif"/>
</dbReference>
<dbReference type="NCBIfam" id="NF003419">
    <property type="entry name" value="PRK04837.1"/>
    <property type="match status" value="1"/>
</dbReference>
<dbReference type="PANTHER" id="PTHR47959:SF10">
    <property type="entry name" value="ATP-DEPENDENT RNA HELICASE RHLB"/>
    <property type="match status" value="1"/>
</dbReference>
<dbReference type="PANTHER" id="PTHR47959">
    <property type="entry name" value="ATP-DEPENDENT RNA HELICASE RHLE-RELATED"/>
    <property type="match status" value="1"/>
</dbReference>
<dbReference type="Pfam" id="PF00270">
    <property type="entry name" value="DEAD"/>
    <property type="match status" value="1"/>
</dbReference>
<dbReference type="Pfam" id="PF00271">
    <property type="entry name" value="Helicase_C"/>
    <property type="match status" value="1"/>
</dbReference>
<dbReference type="SMART" id="SM00487">
    <property type="entry name" value="DEXDc"/>
    <property type="match status" value="1"/>
</dbReference>
<dbReference type="SMART" id="SM00490">
    <property type="entry name" value="HELICc"/>
    <property type="match status" value="1"/>
</dbReference>
<dbReference type="SUPFAM" id="SSF52540">
    <property type="entry name" value="P-loop containing nucleoside triphosphate hydrolases"/>
    <property type="match status" value="1"/>
</dbReference>
<dbReference type="PROSITE" id="PS00039">
    <property type="entry name" value="DEAD_ATP_HELICASE"/>
    <property type="match status" value="1"/>
</dbReference>
<dbReference type="PROSITE" id="PS51192">
    <property type="entry name" value="HELICASE_ATP_BIND_1"/>
    <property type="match status" value="1"/>
</dbReference>
<dbReference type="PROSITE" id="PS51194">
    <property type="entry name" value="HELICASE_CTER"/>
    <property type="match status" value="1"/>
</dbReference>
<dbReference type="PROSITE" id="PS51195">
    <property type="entry name" value="Q_MOTIF"/>
    <property type="match status" value="1"/>
</dbReference>
<reference key="1">
    <citation type="journal article" date="2008" name="J. Bacteriol.">
        <title>The pangenome structure of Escherichia coli: comparative genomic analysis of E. coli commensal and pathogenic isolates.</title>
        <authorList>
            <person name="Rasko D.A."/>
            <person name="Rosovitz M.J."/>
            <person name="Myers G.S.A."/>
            <person name="Mongodin E.F."/>
            <person name="Fricke W.F."/>
            <person name="Gajer P."/>
            <person name="Crabtree J."/>
            <person name="Sebaihia M."/>
            <person name="Thomson N.R."/>
            <person name="Chaudhuri R."/>
            <person name="Henderson I.R."/>
            <person name="Sperandio V."/>
            <person name="Ravel J."/>
        </authorList>
    </citation>
    <scope>NUCLEOTIDE SEQUENCE [LARGE SCALE GENOMIC DNA]</scope>
    <source>
        <strain>E24377A / ETEC</strain>
    </source>
</reference>
<name>RHLB_ECO24</name>
<keyword id="KW-0067">ATP-binding</keyword>
<keyword id="KW-0963">Cytoplasm</keyword>
<keyword id="KW-0347">Helicase</keyword>
<keyword id="KW-0378">Hydrolase</keyword>
<keyword id="KW-0547">Nucleotide-binding</keyword>
<keyword id="KW-1185">Reference proteome</keyword>
<keyword id="KW-0694">RNA-binding</keyword>